<sequence>MPKIKTRRSAAKRFSVTGSGKFRRRKQNLRHILTKKSAKRKMNLGQSAIVDATNEKAVRRMMPYA</sequence>
<feature type="chain" id="PRO_0000177358" description="Large ribosomal subunit protein bL35">
    <location>
        <begin position="1"/>
        <end position="65"/>
    </location>
</feature>
<feature type="region of interest" description="Disordered" evidence="2">
    <location>
        <begin position="1"/>
        <end position="25"/>
    </location>
</feature>
<feature type="compositionally biased region" description="Basic residues" evidence="2">
    <location>
        <begin position="1"/>
        <end position="11"/>
    </location>
</feature>
<accession>Q728R7</accession>
<evidence type="ECO:0000255" key="1">
    <source>
        <dbReference type="HAMAP-Rule" id="MF_00514"/>
    </source>
</evidence>
<evidence type="ECO:0000256" key="2">
    <source>
        <dbReference type="SAM" id="MobiDB-lite"/>
    </source>
</evidence>
<evidence type="ECO:0000305" key="3"/>
<name>RL35_NITV2</name>
<proteinExistence type="inferred from homology"/>
<reference key="1">
    <citation type="journal article" date="2004" name="Nat. Biotechnol.">
        <title>The genome sequence of the anaerobic, sulfate-reducing bacterium Desulfovibrio vulgaris Hildenborough.</title>
        <authorList>
            <person name="Heidelberg J.F."/>
            <person name="Seshadri R."/>
            <person name="Haveman S.A."/>
            <person name="Hemme C.L."/>
            <person name="Paulsen I.T."/>
            <person name="Kolonay J.F."/>
            <person name="Eisen J.A."/>
            <person name="Ward N.L."/>
            <person name="Methe B.A."/>
            <person name="Brinkac L.M."/>
            <person name="Daugherty S.C."/>
            <person name="DeBoy R.T."/>
            <person name="Dodson R.J."/>
            <person name="Durkin A.S."/>
            <person name="Madupu R."/>
            <person name="Nelson W.C."/>
            <person name="Sullivan S.A."/>
            <person name="Fouts D.E."/>
            <person name="Haft D.H."/>
            <person name="Selengut J."/>
            <person name="Peterson J.D."/>
            <person name="Davidsen T.M."/>
            <person name="Zafar N."/>
            <person name="Zhou L."/>
            <person name="Radune D."/>
            <person name="Dimitrov G."/>
            <person name="Hance M."/>
            <person name="Tran K."/>
            <person name="Khouri H.M."/>
            <person name="Gill J."/>
            <person name="Utterback T.R."/>
            <person name="Feldblyum T.V."/>
            <person name="Wall J.D."/>
            <person name="Voordouw G."/>
            <person name="Fraser C.M."/>
        </authorList>
    </citation>
    <scope>NUCLEOTIDE SEQUENCE [LARGE SCALE GENOMIC DNA]</scope>
    <source>
        <strain>ATCC 29579 / DSM 644 / CCUG 34227 / NCIMB 8303 / VKM B-1760 / Hildenborough</strain>
    </source>
</reference>
<organism>
    <name type="scientific">Nitratidesulfovibrio vulgaris (strain ATCC 29579 / DSM 644 / CCUG 34227 / NCIMB 8303 / VKM B-1760 / Hildenborough)</name>
    <name type="common">Desulfovibrio vulgaris</name>
    <dbReference type="NCBI Taxonomy" id="882"/>
    <lineage>
        <taxon>Bacteria</taxon>
        <taxon>Pseudomonadati</taxon>
        <taxon>Thermodesulfobacteriota</taxon>
        <taxon>Desulfovibrionia</taxon>
        <taxon>Desulfovibrionales</taxon>
        <taxon>Desulfovibrionaceae</taxon>
        <taxon>Nitratidesulfovibrio</taxon>
    </lineage>
</organism>
<keyword id="KW-1185">Reference proteome</keyword>
<keyword id="KW-0687">Ribonucleoprotein</keyword>
<keyword id="KW-0689">Ribosomal protein</keyword>
<protein>
    <recommendedName>
        <fullName evidence="1">Large ribosomal subunit protein bL35</fullName>
    </recommendedName>
    <alternativeName>
        <fullName evidence="3">50S ribosomal protein L35</fullName>
    </alternativeName>
</protein>
<comment type="similarity">
    <text evidence="1">Belongs to the bacterial ribosomal protein bL35 family.</text>
</comment>
<gene>
    <name evidence="1" type="primary">rpmI</name>
    <name type="ordered locus">DVU_2536</name>
</gene>
<dbReference type="EMBL" id="AE017285">
    <property type="protein sequence ID" value="AAS97008.1"/>
    <property type="molecule type" value="Genomic_DNA"/>
</dbReference>
<dbReference type="RefSeq" id="WP_010939806.1">
    <property type="nucleotide sequence ID" value="NC_002937.3"/>
</dbReference>
<dbReference type="RefSeq" id="YP_011748.1">
    <property type="nucleotide sequence ID" value="NC_002937.3"/>
</dbReference>
<dbReference type="SMR" id="Q728R7"/>
<dbReference type="STRING" id="882.DVU_2536"/>
<dbReference type="PaxDb" id="882-DVU_2536"/>
<dbReference type="EnsemblBacteria" id="AAS97008">
    <property type="protein sequence ID" value="AAS97008"/>
    <property type="gene ID" value="DVU_2536"/>
</dbReference>
<dbReference type="KEGG" id="dvu:DVU_2536"/>
<dbReference type="PATRIC" id="fig|882.5.peg.2294"/>
<dbReference type="eggNOG" id="COG0291">
    <property type="taxonomic scope" value="Bacteria"/>
</dbReference>
<dbReference type="HOGENOM" id="CLU_169643_1_1_7"/>
<dbReference type="OrthoDB" id="9804851at2"/>
<dbReference type="PhylomeDB" id="Q728R7"/>
<dbReference type="Proteomes" id="UP000002194">
    <property type="component" value="Chromosome"/>
</dbReference>
<dbReference type="GO" id="GO:0022625">
    <property type="term" value="C:cytosolic large ribosomal subunit"/>
    <property type="evidence" value="ECO:0007669"/>
    <property type="project" value="TreeGrafter"/>
</dbReference>
<dbReference type="GO" id="GO:0003735">
    <property type="term" value="F:structural constituent of ribosome"/>
    <property type="evidence" value="ECO:0007669"/>
    <property type="project" value="InterPro"/>
</dbReference>
<dbReference type="GO" id="GO:0006412">
    <property type="term" value="P:translation"/>
    <property type="evidence" value="ECO:0007669"/>
    <property type="project" value="UniProtKB-UniRule"/>
</dbReference>
<dbReference type="FunFam" id="4.10.410.60:FF:000001">
    <property type="entry name" value="50S ribosomal protein L35"/>
    <property type="match status" value="1"/>
</dbReference>
<dbReference type="Gene3D" id="4.10.410.60">
    <property type="match status" value="1"/>
</dbReference>
<dbReference type="HAMAP" id="MF_00514">
    <property type="entry name" value="Ribosomal_bL35"/>
    <property type="match status" value="1"/>
</dbReference>
<dbReference type="InterPro" id="IPR001706">
    <property type="entry name" value="Ribosomal_bL35"/>
</dbReference>
<dbReference type="InterPro" id="IPR021137">
    <property type="entry name" value="Ribosomal_bL35-like"/>
</dbReference>
<dbReference type="InterPro" id="IPR018265">
    <property type="entry name" value="Ribosomal_bL35_CS"/>
</dbReference>
<dbReference type="InterPro" id="IPR037229">
    <property type="entry name" value="Ribosomal_bL35_sf"/>
</dbReference>
<dbReference type="NCBIfam" id="TIGR00001">
    <property type="entry name" value="rpmI_bact"/>
    <property type="match status" value="1"/>
</dbReference>
<dbReference type="PANTHER" id="PTHR33343">
    <property type="entry name" value="54S RIBOSOMAL PROTEIN BL35M"/>
    <property type="match status" value="1"/>
</dbReference>
<dbReference type="PANTHER" id="PTHR33343:SF1">
    <property type="entry name" value="LARGE RIBOSOMAL SUBUNIT PROTEIN BL35M"/>
    <property type="match status" value="1"/>
</dbReference>
<dbReference type="Pfam" id="PF01632">
    <property type="entry name" value="Ribosomal_L35p"/>
    <property type="match status" value="1"/>
</dbReference>
<dbReference type="PRINTS" id="PR00064">
    <property type="entry name" value="RIBOSOMALL35"/>
</dbReference>
<dbReference type="SUPFAM" id="SSF143034">
    <property type="entry name" value="L35p-like"/>
    <property type="match status" value="1"/>
</dbReference>
<dbReference type="PROSITE" id="PS00936">
    <property type="entry name" value="RIBOSOMAL_L35"/>
    <property type="match status" value="1"/>
</dbReference>